<gene>
    <name type="ordered locus">At4g26020</name>
    <name type="ORF">F20B18.130</name>
</gene>
<feature type="chain" id="PRO_0000408301" description="Protein At-4/1">
    <location>
        <begin position="1"/>
        <end position="247"/>
    </location>
</feature>
<feature type="coiled-coil region" evidence="1">
    <location>
        <begin position="39"/>
        <end position="126"/>
    </location>
</feature>
<feature type="coiled-coil region" evidence="1">
    <location>
        <begin position="182"/>
        <end position="247"/>
    </location>
</feature>
<feature type="sequence conflict" description="In Ref. 5; AAO32317." evidence="3" ref="5">
    <original>K</original>
    <variation>R</variation>
    <location>
        <position position="189"/>
    </location>
</feature>
<dbReference type="EMBL" id="AL049483">
    <property type="protein sequence ID" value="CAB39667.1"/>
    <property type="status" value="ALT_SEQ"/>
    <property type="molecule type" value="Genomic_DNA"/>
</dbReference>
<dbReference type="EMBL" id="AL161564">
    <property type="protein sequence ID" value="CAB79457.1"/>
    <property type="status" value="ALT_SEQ"/>
    <property type="molecule type" value="Genomic_DNA"/>
</dbReference>
<dbReference type="EMBL" id="CP002687">
    <property type="protein sequence ID" value="AEE85145.1"/>
    <property type="molecule type" value="Genomic_DNA"/>
</dbReference>
<dbReference type="EMBL" id="CP002687">
    <property type="protein sequence ID" value="ANM67465.1"/>
    <property type="molecule type" value="Genomic_DNA"/>
</dbReference>
<dbReference type="EMBL" id="DQ446869">
    <property type="protein sequence ID" value="ABE66090.1"/>
    <property type="molecule type" value="mRNA"/>
</dbReference>
<dbReference type="EMBL" id="DQ653224">
    <property type="protein sequence ID" value="ABK28649.1"/>
    <property type="status" value="ALT_SEQ"/>
    <property type="molecule type" value="mRNA"/>
</dbReference>
<dbReference type="EMBL" id="AY212284">
    <property type="protein sequence ID" value="AAO32317.1"/>
    <property type="molecule type" value="mRNA"/>
</dbReference>
<dbReference type="PIR" id="T04257">
    <property type="entry name" value="T04257"/>
</dbReference>
<dbReference type="RefSeq" id="NP_001329294.1">
    <molecule id="Q1PE49-1"/>
    <property type="nucleotide sequence ID" value="NM_001341773.1"/>
</dbReference>
<dbReference type="RefSeq" id="NP_194332.2">
    <molecule id="Q1PE49-1"/>
    <property type="nucleotide sequence ID" value="NM_118735.3"/>
</dbReference>
<dbReference type="SMR" id="Q1PE49"/>
<dbReference type="STRING" id="3702.Q1PE49"/>
<dbReference type="PaxDb" id="3702-AT4G26020.2"/>
<dbReference type="EnsemblPlants" id="AT4G26020.1">
    <molecule id="Q1PE49-1"/>
    <property type="protein sequence ID" value="AT4G26020.1"/>
    <property type="gene ID" value="AT4G26020"/>
</dbReference>
<dbReference type="EnsemblPlants" id="AT4G26020.3">
    <molecule id="Q1PE49-1"/>
    <property type="protein sequence ID" value="AT4G26020.3"/>
    <property type="gene ID" value="AT4G26020"/>
</dbReference>
<dbReference type="GeneID" id="828708"/>
<dbReference type="Gramene" id="AT4G26020.1">
    <molecule id="Q1PE49-1"/>
    <property type="protein sequence ID" value="AT4G26020.1"/>
    <property type="gene ID" value="AT4G26020"/>
</dbReference>
<dbReference type="Gramene" id="AT4G26020.3">
    <molecule id="Q1PE49-1"/>
    <property type="protein sequence ID" value="AT4G26020.3"/>
    <property type="gene ID" value="AT4G26020"/>
</dbReference>
<dbReference type="KEGG" id="ath:AT4G26020"/>
<dbReference type="Araport" id="AT4G26020"/>
<dbReference type="TAIR" id="AT4G26020"/>
<dbReference type="eggNOG" id="ENOG502RBMV">
    <property type="taxonomic scope" value="Eukaryota"/>
</dbReference>
<dbReference type="HOGENOM" id="CLU_085523_0_0_1"/>
<dbReference type="InParanoid" id="Q1PE49"/>
<dbReference type="OMA" id="TRHIDMF"/>
<dbReference type="OrthoDB" id="1932629at2759"/>
<dbReference type="PhylomeDB" id="Q1PE49"/>
<dbReference type="PRO" id="PR:Q1PE49"/>
<dbReference type="Proteomes" id="UP000006548">
    <property type="component" value="Chromosome 4"/>
</dbReference>
<dbReference type="ExpressionAtlas" id="Q1PE49">
    <property type="expression patterns" value="baseline and differential"/>
</dbReference>
<dbReference type="GO" id="GO:0005783">
    <property type="term" value="C:endoplasmic reticulum"/>
    <property type="evidence" value="ECO:0000314"/>
    <property type="project" value="UniProtKB"/>
</dbReference>
<dbReference type="GO" id="GO:0009506">
    <property type="term" value="C:plasmodesma"/>
    <property type="evidence" value="ECO:0000314"/>
    <property type="project" value="UniProtKB"/>
</dbReference>
<dbReference type="GO" id="GO:0010496">
    <property type="term" value="P:intercellular transport"/>
    <property type="evidence" value="ECO:0000314"/>
    <property type="project" value="UniProtKB"/>
</dbReference>
<dbReference type="GO" id="GO:0046907">
    <property type="term" value="P:intracellular transport"/>
    <property type="evidence" value="ECO:0000314"/>
    <property type="project" value="UniProtKB"/>
</dbReference>
<reference key="1">
    <citation type="journal article" date="2006" name="Mol. Plant Microbe Interact.">
        <title>At-4/1, an interactor of the Tomato spotted wilt virus movement protein, belongs to a new family of plant proteins capable of directed intra- and intercellular trafficking.</title>
        <authorList>
            <person name="Paape M."/>
            <person name="Solovyev A.G."/>
            <person name="Erokhina T.N."/>
            <person name="Minina E.A."/>
            <person name="Schepetilnikov M.V."/>
            <person name="Lesemann D.-E."/>
            <person name="Schiemann J."/>
            <person name="Morozov S.Y."/>
            <person name="Kellmann J.-W."/>
        </authorList>
    </citation>
    <scope>NUCLEOTIDE SEQUENCE [MRNA]</scope>
    <scope>FUNCTION</scope>
    <scope>SUBCELLULAR LOCATION</scope>
    <scope>INTERACTION WITH VIRAL TOMATO SPOTTED WILT VIRUS NSM PROTEIN</scope>
    <scope>TISSUE SPECIFICITY</scope>
    <source>
        <strain>cv. Columbia</strain>
    </source>
</reference>
<reference key="2">
    <citation type="journal article" date="1999" name="Nature">
        <title>Sequence and analysis of chromosome 4 of the plant Arabidopsis thaliana.</title>
        <authorList>
            <person name="Mayer K.F.X."/>
            <person name="Schueller C."/>
            <person name="Wambutt R."/>
            <person name="Murphy G."/>
            <person name="Volckaert G."/>
            <person name="Pohl T."/>
            <person name="Duesterhoeft A."/>
            <person name="Stiekema W."/>
            <person name="Entian K.-D."/>
            <person name="Terryn N."/>
            <person name="Harris B."/>
            <person name="Ansorge W."/>
            <person name="Brandt P."/>
            <person name="Grivell L.A."/>
            <person name="Rieger M."/>
            <person name="Weichselgartner M."/>
            <person name="de Simone V."/>
            <person name="Obermaier B."/>
            <person name="Mache R."/>
            <person name="Mueller M."/>
            <person name="Kreis M."/>
            <person name="Delseny M."/>
            <person name="Puigdomenech P."/>
            <person name="Watson M."/>
            <person name="Schmidtheini T."/>
            <person name="Reichert B."/>
            <person name="Portetelle D."/>
            <person name="Perez-Alonso M."/>
            <person name="Boutry M."/>
            <person name="Bancroft I."/>
            <person name="Vos P."/>
            <person name="Hoheisel J."/>
            <person name="Zimmermann W."/>
            <person name="Wedler H."/>
            <person name="Ridley P."/>
            <person name="Langham S.-A."/>
            <person name="McCullagh B."/>
            <person name="Bilham L."/>
            <person name="Robben J."/>
            <person name="van der Schueren J."/>
            <person name="Grymonprez B."/>
            <person name="Chuang Y.-J."/>
            <person name="Vandenbussche F."/>
            <person name="Braeken M."/>
            <person name="Weltjens I."/>
            <person name="Voet M."/>
            <person name="Bastiaens I."/>
            <person name="Aert R."/>
            <person name="Defoor E."/>
            <person name="Weitzenegger T."/>
            <person name="Bothe G."/>
            <person name="Ramsperger U."/>
            <person name="Hilbert H."/>
            <person name="Braun M."/>
            <person name="Holzer E."/>
            <person name="Brandt A."/>
            <person name="Peters S."/>
            <person name="van Staveren M."/>
            <person name="Dirkse W."/>
            <person name="Mooijman P."/>
            <person name="Klein Lankhorst R."/>
            <person name="Rose M."/>
            <person name="Hauf J."/>
            <person name="Koetter P."/>
            <person name="Berneiser S."/>
            <person name="Hempel S."/>
            <person name="Feldpausch M."/>
            <person name="Lamberth S."/>
            <person name="Van den Daele H."/>
            <person name="De Keyser A."/>
            <person name="Buysshaert C."/>
            <person name="Gielen J."/>
            <person name="Villarroel R."/>
            <person name="De Clercq R."/>
            <person name="van Montagu M."/>
            <person name="Rogers J."/>
            <person name="Cronin A."/>
            <person name="Quail M.A."/>
            <person name="Bray-Allen S."/>
            <person name="Clark L."/>
            <person name="Doggett J."/>
            <person name="Hall S."/>
            <person name="Kay M."/>
            <person name="Lennard N."/>
            <person name="McLay K."/>
            <person name="Mayes R."/>
            <person name="Pettett A."/>
            <person name="Rajandream M.A."/>
            <person name="Lyne M."/>
            <person name="Benes V."/>
            <person name="Rechmann S."/>
            <person name="Borkova D."/>
            <person name="Bloecker H."/>
            <person name="Scharfe M."/>
            <person name="Grimm M."/>
            <person name="Loehnert T.-H."/>
            <person name="Dose S."/>
            <person name="de Haan M."/>
            <person name="Maarse A.C."/>
            <person name="Schaefer M."/>
            <person name="Mueller-Auer S."/>
            <person name="Gabel C."/>
            <person name="Fuchs M."/>
            <person name="Fartmann B."/>
            <person name="Granderath K."/>
            <person name="Dauner D."/>
            <person name="Herzl A."/>
            <person name="Neumann S."/>
            <person name="Argiriou A."/>
            <person name="Vitale D."/>
            <person name="Liguori R."/>
            <person name="Piravandi E."/>
            <person name="Massenet O."/>
            <person name="Quigley F."/>
            <person name="Clabauld G."/>
            <person name="Muendlein A."/>
            <person name="Felber R."/>
            <person name="Schnabl S."/>
            <person name="Hiller R."/>
            <person name="Schmidt W."/>
            <person name="Lecharny A."/>
            <person name="Aubourg S."/>
            <person name="Chefdor F."/>
            <person name="Cooke R."/>
            <person name="Berger C."/>
            <person name="Monfort A."/>
            <person name="Casacuberta E."/>
            <person name="Gibbons T."/>
            <person name="Weber N."/>
            <person name="Vandenbol M."/>
            <person name="Bargues M."/>
            <person name="Terol J."/>
            <person name="Torres A."/>
            <person name="Perez-Perez A."/>
            <person name="Purnelle B."/>
            <person name="Bent E."/>
            <person name="Johnson S."/>
            <person name="Tacon D."/>
            <person name="Jesse T."/>
            <person name="Heijnen L."/>
            <person name="Schwarz S."/>
            <person name="Scholler P."/>
            <person name="Heber S."/>
            <person name="Francs P."/>
            <person name="Bielke C."/>
            <person name="Frishman D."/>
            <person name="Haase D."/>
            <person name="Lemcke K."/>
            <person name="Mewes H.-W."/>
            <person name="Stocker S."/>
            <person name="Zaccaria P."/>
            <person name="Bevan M."/>
            <person name="Wilson R.K."/>
            <person name="de la Bastide M."/>
            <person name="Habermann K."/>
            <person name="Parnell L."/>
            <person name="Dedhia N."/>
            <person name="Gnoj L."/>
            <person name="Schutz K."/>
            <person name="Huang E."/>
            <person name="Spiegel L."/>
            <person name="Sekhon M."/>
            <person name="Murray J."/>
            <person name="Sheet P."/>
            <person name="Cordes M."/>
            <person name="Abu-Threideh J."/>
            <person name="Stoneking T."/>
            <person name="Kalicki J."/>
            <person name="Graves T."/>
            <person name="Harmon G."/>
            <person name="Edwards J."/>
            <person name="Latreille P."/>
            <person name="Courtney L."/>
            <person name="Cloud J."/>
            <person name="Abbott A."/>
            <person name="Scott K."/>
            <person name="Johnson D."/>
            <person name="Minx P."/>
            <person name="Bentley D."/>
            <person name="Fulton B."/>
            <person name="Miller N."/>
            <person name="Greco T."/>
            <person name="Kemp K."/>
            <person name="Kramer J."/>
            <person name="Fulton L."/>
            <person name="Mardis E."/>
            <person name="Dante M."/>
            <person name="Pepin K."/>
            <person name="Hillier L.W."/>
            <person name="Nelson J."/>
            <person name="Spieth J."/>
            <person name="Ryan E."/>
            <person name="Andrews S."/>
            <person name="Geisel C."/>
            <person name="Layman D."/>
            <person name="Du H."/>
            <person name="Ali J."/>
            <person name="Berghoff A."/>
            <person name="Jones K."/>
            <person name="Drone K."/>
            <person name="Cotton M."/>
            <person name="Joshu C."/>
            <person name="Antonoiu B."/>
            <person name="Zidanic M."/>
            <person name="Strong C."/>
            <person name="Sun H."/>
            <person name="Lamar B."/>
            <person name="Yordan C."/>
            <person name="Ma P."/>
            <person name="Zhong J."/>
            <person name="Preston R."/>
            <person name="Vil D."/>
            <person name="Shekher M."/>
            <person name="Matero A."/>
            <person name="Shah R."/>
            <person name="Swaby I.K."/>
            <person name="O'Shaughnessy A."/>
            <person name="Rodriguez M."/>
            <person name="Hoffman J."/>
            <person name="Till S."/>
            <person name="Granat S."/>
            <person name="Shohdy N."/>
            <person name="Hasegawa A."/>
            <person name="Hameed A."/>
            <person name="Lodhi M."/>
            <person name="Johnson A."/>
            <person name="Chen E."/>
            <person name="Marra M.A."/>
            <person name="Martienssen R."/>
            <person name="McCombie W.R."/>
        </authorList>
    </citation>
    <scope>NUCLEOTIDE SEQUENCE [LARGE SCALE GENOMIC DNA]</scope>
    <source>
        <strain>cv. Columbia</strain>
    </source>
</reference>
<reference key="3">
    <citation type="journal article" date="2017" name="Plant J.">
        <title>Araport11: a complete reannotation of the Arabidopsis thaliana reference genome.</title>
        <authorList>
            <person name="Cheng C.Y."/>
            <person name="Krishnakumar V."/>
            <person name="Chan A.P."/>
            <person name="Thibaud-Nissen F."/>
            <person name="Schobel S."/>
            <person name="Town C.D."/>
        </authorList>
    </citation>
    <scope>GENOME REANNOTATION</scope>
    <source>
        <strain>cv. Columbia</strain>
    </source>
</reference>
<reference key="4">
    <citation type="journal article" date="2006" name="Plant Biotechnol. J.">
        <title>Simultaneous high-throughput recombinational cloning of open reading frames in closed and open configurations.</title>
        <authorList>
            <person name="Underwood B.A."/>
            <person name="Vanderhaeghen R."/>
            <person name="Whitford R."/>
            <person name="Town C.D."/>
            <person name="Hilson P."/>
        </authorList>
    </citation>
    <scope>NUCLEOTIDE SEQUENCE [LARGE SCALE MRNA]</scope>
    <source>
        <strain>cv. Columbia</strain>
    </source>
</reference>
<reference key="5">
    <citation type="journal article" date="2001" name="Plant Physiol. Biochem.">
        <title>Interactions between the tomato spotted wilt virus movement protein and plant proteins showing homologies to myosin, kinesin and DnaJ-like chaperones.</title>
        <authorList>
            <person name="von Bargen S."/>
            <person name="Salchert K."/>
            <person name="Paape M."/>
            <person name="Piechulla B."/>
            <person name="Kellmann J.W."/>
        </authorList>
    </citation>
    <scope>NUCLEOTIDE SEQUENCE [MRNA] OF 6-247</scope>
</reference>
<protein>
    <recommendedName>
        <fullName>Protein At-4/1</fullName>
    </recommendedName>
    <alternativeName>
        <fullName>Tomato spotted wilt virus movement protein-interacting protein 4/1</fullName>
        <shortName>At-4/1</shortName>
    </alternativeName>
</protein>
<proteinExistence type="evidence at protein level"/>
<organism>
    <name type="scientific">Arabidopsis thaliana</name>
    <name type="common">Mouse-ear cress</name>
    <dbReference type="NCBI Taxonomy" id="3702"/>
    <lineage>
        <taxon>Eukaryota</taxon>
        <taxon>Viridiplantae</taxon>
        <taxon>Streptophyta</taxon>
        <taxon>Embryophyta</taxon>
        <taxon>Tracheophyta</taxon>
        <taxon>Spermatophyta</taxon>
        <taxon>Magnoliopsida</taxon>
        <taxon>eudicotyledons</taxon>
        <taxon>Gunneridae</taxon>
        <taxon>Pentapetalae</taxon>
        <taxon>rosids</taxon>
        <taxon>malvids</taxon>
        <taxon>Brassicales</taxon>
        <taxon>Brassicaceae</taxon>
        <taxon>Camelineae</taxon>
        <taxon>Arabidopsis</taxon>
    </lineage>
</organism>
<evidence type="ECO:0000255" key="1"/>
<evidence type="ECO:0000269" key="2">
    <source>
    </source>
</evidence>
<evidence type="ECO:0000305" key="3"/>
<name>4ON1_ARATH</name>
<keyword id="KW-0025">Alternative splicing</keyword>
<keyword id="KW-0965">Cell junction</keyword>
<keyword id="KW-0175">Coiled coil</keyword>
<keyword id="KW-0256">Endoplasmic reticulum</keyword>
<keyword id="KW-0945">Host-virus interaction</keyword>
<keyword id="KW-1185">Reference proteome</keyword>
<keyword id="KW-0813">Transport</keyword>
<comment type="function">
    <text evidence="2">Involved in intra- and inter-cellular trafficking through plasmodesmata (PD).</text>
</comment>
<comment type="subunit">
    <text evidence="2">Interacts with viral tomato spotted wilt virus (TSWV) movement protein NSM, which is involved in cell-to cell spread of viral genome and enlargement of the host plasmodesmata size exclusion limit (SEL).</text>
</comment>
<comment type="subcellular location">
    <subcellularLocation>
        <location evidence="2">Endoplasmic reticulum</location>
    </subcellularLocation>
    <subcellularLocation>
        <location evidence="2">Cell junction</location>
        <location evidence="2">Plasmodesma</location>
    </subcellularLocation>
    <text>Accumulates intracellularly in a polarized fashion, into punctate spots at the cell periphery. Located at both orifices of the plasmodesmatal pore of adjacent cells. Can move through plasmodesmata.</text>
</comment>
<comment type="alternative products">
    <event type="alternative splicing"/>
    <isoform>
        <id>Q1PE49-1</id>
        <name>1</name>
        <sequence type="displayed"/>
    </isoform>
    <text>A number of isoforms are produced. According to EST sequences.</text>
</comment>
<comment type="tissue specificity">
    <text evidence="2">Expressed in leaves (at protein level).</text>
</comment>
<comment type="domain">
    <text>The C-terminal part of the protein in required for plasmodesma localization.</text>
</comment>
<comment type="sequence caution" evidence="3">
    <conflict type="erroneous termination">
        <sequence resource="EMBL-CDS" id="ABK28649"/>
    </conflict>
    <text>Extended C-terminus.</text>
</comment>
<comment type="sequence caution" evidence="3">
    <conflict type="erroneous gene model prediction">
        <sequence resource="EMBL-CDS" id="CAB39667"/>
    </conflict>
</comment>
<comment type="sequence caution" evidence="3">
    <conflict type="erroneous gene model prediction">
        <sequence resource="EMBL-CDS" id="CAB79457"/>
    </conflict>
</comment>
<accession>Q1PE49</accession>
<accession>A0MF98</accession>
<accession>Q84UC5</accession>
<accession>Q9SZH6</accession>
<sequence>MAATSDEQMNLLLSSFDQIYEDFKIGLNEINVYRSKSNVESSRREVLEISNKNLKEENERLKKLYTESLNNFADQLEHRTKCHSLKEELKRVNDENKSKEHEHRNALESLRQKHVTKVEELEYKIRSLLVEKATNDMVIDRLRQDLTANKSHIQAMSKKLDRVVTEVECKYELEIQDLKDCLLMEQAEKNDISNKLQSLQKELLISRTSIAEKQRDTTSNRQVETLKQKLMKLRKENEILKRKLSSS</sequence>